<protein>
    <recommendedName>
        <fullName evidence="1">Photosystem II CP47 reaction center protein</fullName>
    </recommendedName>
    <alternativeName>
        <fullName evidence="1">PSII 47 kDa protein</fullName>
    </alternativeName>
    <alternativeName>
        <fullName evidence="1">Protein CP-47</fullName>
    </alternativeName>
</protein>
<organism>
    <name type="scientific">Populus deltoides</name>
    <name type="common">Eastern poplar</name>
    <name type="synonym">Eastern cottonwood</name>
    <dbReference type="NCBI Taxonomy" id="3696"/>
    <lineage>
        <taxon>Eukaryota</taxon>
        <taxon>Viridiplantae</taxon>
        <taxon>Streptophyta</taxon>
        <taxon>Embryophyta</taxon>
        <taxon>Tracheophyta</taxon>
        <taxon>Spermatophyta</taxon>
        <taxon>Magnoliopsida</taxon>
        <taxon>eudicotyledons</taxon>
        <taxon>Gunneridae</taxon>
        <taxon>Pentapetalae</taxon>
        <taxon>rosids</taxon>
        <taxon>fabids</taxon>
        <taxon>Malpighiales</taxon>
        <taxon>Salicaceae</taxon>
        <taxon>Saliceae</taxon>
        <taxon>Populus</taxon>
    </lineage>
</organism>
<dbReference type="EMBL" id="Y13328">
    <property type="protein sequence ID" value="CAA73765.1"/>
    <property type="molecule type" value="Genomic_DNA"/>
</dbReference>
<dbReference type="SMR" id="O03061"/>
<dbReference type="GO" id="GO:0009535">
    <property type="term" value="C:chloroplast thylakoid membrane"/>
    <property type="evidence" value="ECO:0007669"/>
    <property type="project" value="UniProtKB-SubCell"/>
</dbReference>
<dbReference type="GO" id="GO:0009523">
    <property type="term" value="C:photosystem II"/>
    <property type="evidence" value="ECO:0007669"/>
    <property type="project" value="UniProtKB-KW"/>
</dbReference>
<dbReference type="GO" id="GO:0016168">
    <property type="term" value="F:chlorophyll binding"/>
    <property type="evidence" value="ECO:0007669"/>
    <property type="project" value="UniProtKB-UniRule"/>
</dbReference>
<dbReference type="GO" id="GO:0045156">
    <property type="term" value="F:electron transporter, transferring electrons within the cyclic electron transport pathway of photosynthesis activity"/>
    <property type="evidence" value="ECO:0007669"/>
    <property type="project" value="InterPro"/>
</dbReference>
<dbReference type="GO" id="GO:0009772">
    <property type="term" value="P:photosynthetic electron transport in photosystem II"/>
    <property type="evidence" value="ECO:0007669"/>
    <property type="project" value="InterPro"/>
</dbReference>
<dbReference type="FunFam" id="3.10.680.10:FF:000001">
    <property type="entry name" value="Photosystem II CP47 reaction center protein"/>
    <property type="match status" value="1"/>
</dbReference>
<dbReference type="Gene3D" id="3.10.680.10">
    <property type="entry name" value="Photosystem II CP47 reaction center protein"/>
    <property type="match status" value="1"/>
</dbReference>
<dbReference type="HAMAP" id="MF_01495">
    <property type="entry name" value="PSII_PsbB_CP47"/>
    <property type="match status" value="1"/>
</dbReference>
<dbReference type="InterPro" id="IPR000932">
    <property type="entry name" value="PS_antenna-like"/>
</dbReference>
<dbReference type="InterPro" id="IPR036001">
    <property type="entry name" value="PS_II_antenna-like_sf"/>
</dbReference>
<dbReference type="InterPro" id="IPR017486">
    <property type="entry name" value="PSII_PsbB"/>
</dbReference>
<dbReference type="NCBIfam" id="TIGR03039">
    <property type="entry name" value="PS_II_CP47"/>
    <property type="match status" value="1"/>
</dbReference>
<dbReference type="PANTHER" id="PTHR33180">
    <property type="entry name" value="PHOTOSYSTEM II CP43 REACTION CENTER PROTEIN"/>
    <property type="match status" value="1"/>
</dbReference>
<dbReference type="PANTHER" id="PTHR33180:SF38">
    <property type="entry name" value="PHOTOSYSTEM II CP47 REACTION CENTER PROTEIN"/>
    <property type="match status" value="1"/>
</dbReference>
<dbReference type="Pfam" id="PF00421">
    <property type="entry name" value="PSII"/>
    <property type="match status" value="1"/>
</dbReference>
<dbReference type="SUPFAM" id="SSF161077">
    <property type="entry name" value="Photosystem II antenna protein-like"/>
    <property type="match status" value="1"/>
</dbReference>
<gene>
    <name evidence="1" type="primary">psbB</name>
</gene>
<feature type="chain" id="PRO_0000077495" description="Photosystem II CP47 reaction center protein">
    <location>
        <begin position="1"/>
        <end position="509"/>
    </location>
</feature>
<feature type="transmembrane region" description="Helical" evidence="1">
    <location>
        <begin position="21"/>
        <end position="36"/>
    </location>
</feature>
<feature type="transmembrane region" description="Helical" evidence="1">
    <location>
        <begin position="101"/>
        <end position="115"/>
    </location>
</feature>
<feature type="transmembrane region" description="Helical" evidence="1">
    <location>
        <begin position="140"/>
        <end position="156"/>
    </location>
</feature>
<feature type="transmembrane region" description="Helical" evidence="1">
    <location>
        <begin position="203"/>
        <end position="218"/>
    </location>
</feature>
<feature type="transmembrane region" description="Helical" evidence="1">
    <location>
        <begin position="237"/>
        <end position="253"/>
    </location>
</feature>
<feature type="transmembrane region" description="Helical" evidence="1">
    <location>
        <begin position="458"/>
        <end position="473"/>
    </location>
</feature>
<proteinExistence type="inferred from homology"/>
<reference key="1">
    <citation type="submission" date="1997-05" db="EMBL/GenBank/DDBJ databases">
        <authorList>
            <person name="Dixij R."/>
        </authorList>
    </citation>
    <scope>NUCLEOTIDE SEQUENCE [GENOMIC DNA]</scope>
    <source>
        <strain>cv. Stoneville D121</strain>
        <tissue>Leaf</tissue>
    </source>
</reference>
<comment type="function">
    <text evidence="1">One of the components of the core complex of photosystem II (PSII). It binds chlorophyll and helps catalyze the primary light-induced photochemical processes of PSII. PSII is a light-driven water:plastoquinone oxidoreductase, using light energy to abstract electrons from H(2)O, generating O(2) and a proton gradient subsequently used for ATP formation.</text>
</comment>
<comment type="cofactor">
    <text evidence="1">Binds multiple chlorophylls. PSII binds additional chlorophylls, carotenoids and specific lipids.</text>
</comment>
<comment type="subunit">
    <text evidence="1">PSII is composed of 1 copy each of membrane proteins PsbA, PsbB, PsbC, PsbD, PsbE, PsbF, PsbH, PsbI, PsbJ, PsbK, PsbL, PsbM, PsbT, PsbX, PsbY, PsbZ, Psb30/Ycf12, at least 3 peripheral proteins of the oxygen-evolving complex and a large number of cofactors. It forms dimeric complexes.</text>
</comment>
<comment type="subcellular location">
    <subcellularLocation>
        <location evidence="1">Plastid</location>
        <location evidence="1">Chloroplast thylakoid membrane</location>
        <topology evidence="1">Multi-pass membrane protein</topology>
    </subcellularLocation>
</comment>
<comment type="similarity">
    <text evidence="1">Belongs to the PsbB/PsbC family. PsbB subfamily.</text>
</comment>
<evidence type="ECO:0000255" key="1">
    <source>
        <dbReference type="HAMAP-Rule" id="MF_01495"/>
    </source>
</evidence>
<accession>O03061</accession>
<sequence length="509" mass="56339">MGLPWYRVHTVELNDPGRLLAVHMMHTALVAGWAGSMALYELAVFDPSDPVLDPMWRQGMFVIPFMTRLGITKSWGGWSITGGTITNPGIWSYEGVAGSHIVFSGLCFLAAIWHWVYWDLEIFCDDRTGKPSLDLPKIFGIHLFLSGVACFGFGAFHVTGLYGPGIWVSDPYGLTGKVQSVNPAWGVEGFDPFVPGGIASHHIAAGTLGILAGLFHLSVRPPQRLYKGLRMGNIETVLSSSSIAAVFFAAFVVAGTMWYGSATTPIELFGPTRYQWDQGYFQQEIYRRVGTGLAENQSLSEAWSKIPEKLAFYDYIGNNPAKGGLFRAGSMDNGDGIAIGWLGHPLIRDKEGRDVFVRRIPTFFETFRVVLDDDDGMVRADVPFRRAESKYSVEQVGVTVEFYGGELNGVSYSDPATVKKYARRAQLGEIFELDRATLKSDGVFRSSPRGWFTFGHASFALLFFFGHIWHGSRTLFRDVFAGIDPDLDAQVEFGAFQKLGDPTTRRQVV</sequence>
<geneLocation type="chloroplast"/>
<name>PSBB_POPDE</name>
<keyword id="KW-0148">Chlorophyll</keyword>
<keyword id="KW-0150">Chloroplast</keyword>
<keyword id="KW-0157">Chromophore</keyword>
<keyword id="KW-0472">Membrane</keyword>
<keyword id="KW-0602">Photosynthesis</keyword>
<keyword id="KW-0604">Photosystem II</keyword>
<keyword id="KW-0934">Plastid</keyword>
<keyword id="KW-0793">Thylakoid</keyword>
<keyword id="KW-0812">Transmembrane</keyword>
<keyword id="KW-1133">Transmembrane helix</keyword>